<protein>
    <recommendedName>
        <fullName evidence="1">UPF0346 protein LSL_0716</fullName>
    </recommendedName>
</protein>
<gene>
    <name type="ordered locus">LSL_0716</name>
</gene>
<dbReference type="EMBL" id="CP000233">
    <property type="protein sequence ID" value="ABD99526.1"/>
    <property type="molecule type" value="Genomic_DNA"/>
</dbReference>
<dbReference type="RefSeq" id="WP_003703777.1">
    <property type="nucleotide sequence ID" value="NC_007929.1"/>
</dbReference>
<dbReference type="RefSeq" id="YP_535609.1">
    <property type="nucleotide sequence ID" value="NC_007929.1"/>
</dbReference>
<dbReference type="SMR" id="Q1WU09"/>
<dbReference type="STRING" id="362948.LSL_0716"/>
<dbReference type="KEGG" id="lsl:LSL_0716"/>
<dbReference type="PATRIC" id="fig|362948.14.peg.795"/>
<dbReference type="HOGENOM" id="CLU_177534_1_0_9"/>
<dbReference type="OrthoDB" id="2242851at2"/>
<dbReference type="Proteomes" id="UP000006559">
    <property type="component" value="Chromosome"/>
</dbReference>
<dbReference type="Gene3D" id="1.10.150.260">
    <property type="entry name" value="YozE SAM-like"/>
    <property type="match status" value="1"/>
</dbReference>
<dbReference type="HAMAP" id="MF_01538">
    <property type="entry name" value="UPF0346"/>
    <property type="match status" value="1"/>
</dbReference>
<dbReference type="InterPro" id="IPR010673">
    <property type="entry name" value="UPF0346"/>
</dbReference>
<dbReference type="InterPro" id="IPR023089">
    <property type="entry name" value="YozE_SAM-like"/>
</dbReference>
<dbReference type="InterPro" id="IPR036806">
    <property type="entry name" value="YozE_SAM-like_sf"/>
</dbReference>
<dbReference type="NCBIfam" id="NF010193">
    <property type="entry name" value="PRK13672.1"/>
    <property type="match status" value="1"/>
</dbReference>
<dbReference type="Pfam" id="PF06855">
    <property type="entry name" value="YozE_SAM_like"/>
    <property type="match status" value="1"/>
</dbReference>
<dbReference type="PIRSF" id="PIRSF037262">
    <property type="entry name" value="UCP037262"/>
    <property type="match status" value="1"/>
</dbReference>
<dbReference type="SUPFAM" id="SSF140652">
    <property type="entry name" value="YozE-like"/>
    <property type="match status" value="1"/>
</dbReference>
<accession>Q1WU09</accession>
<organism>
    <name type="scientific">Ligilactobacillus salivarius (strain UCC118)</name>
    <name type="common">Lactobacillus salivarius</name>
    <dbReference type="NCBI Taxonomy" id="362948"/>
    <lineage>
        <taxon>Bacteria</taxon>
        <taxon>Bacillati</taxon>
        <taxon>Bacillota</taxon>
        <taxon>Bacilli</taxon>
        <taxon>Lactobacillales</taxon>
        <taxon>Lactobacillaceae</taxon>
        <taxon>Ligilactobacillus</taxon>
    </lineage>
</organism>
<feature type="chain" id="PRO_0000298744" description="UPF0346 protein LSL_0716">
    <location>
        <begin position="1"/>
        <end position="75"/>
    </location>
</feature>
<comment type="similarity">
    <text evidence="1">Belongs to the UPF0346 family.</text>
</comment>
<proteinExistence type="inferred from homology"/>
<reference key="1">
    <citation type="journal article" date="2006" name="Proc. Natl. Acad. Sci. U.S.A.">
        <title>Multireplicon genome architecture of Lactobacillus salivarius.</title>
        <authorList>
            <person name="Claesson M.J."/>
            <person name="Li Y."/>
            <person name="Leahy S."/>
            <person name="Canchaya C."/>
            <person name="van Pijkeren J.P."/>
            <person name="Cerdeno-Tarraga A.M."/>
            <person name="Parkhill J."/>
            <person name="Flynn S."/>
            <person name="O'Sullivan G.C."/>
            <person name="Collins J.K."/>
            <person name="Higgins D."/>
            <person name="Shanahan F."/>
            <person name="Fitzgerald G.F."/>
            <person name="van Sinderen D."/>
            <person name="O'Toole P.W."/>
        </authorList>
    </citation>
    <scope>NUCLEOTIDE SEQUENCE [LARGE SCALE GENOMIC DNA]</scope>
    <source>
        <strain>UCC118</strain>
    </source>
</reference>
<evidence type="ECO:0000255" key="1">
    <source>
        <dbReference type="HAMAP-Rule" id="MF_01538"/>
    </source>
</evidence>
<name>Y716_LIGS1</name>
<keyword id="KW-1185">Reference proteome</keyword>
<sequence length="75" mass="8922">MSKRQSFYQFLMTERNPDSTDEIAQFANNAFYDQSFPKQADDYDSLSQYLELNGTYLPSMVIFDNAWTKYEEFMS</sequence>